<protein>
    <recommendedName>
        <fullName evidence="1">Elongation factor 4</fullName>
        <shortName evidence="1">EF-4</shortName>
        <ecNumber evidence="1">3.6.5.n1</ecNumber>
    </recommendedName>
    <alternativeName>
        <fullName evidence="1">Ribosomal back-translocase LepA</fullName>
    </alternativeName>
</protein>
<organism>
    <name type="scientific">Herminiimonas arsenicoxydans</name>
    <dbReference type="NCBI Taxonomy" id="204773"/>
    <lineage>
        <taxon>Bacteria</taxon>
        <taxon>Pseudomonadati</taxon>
        <taxon>Pseudomonadota</taxon>
        <taxon>Betaproteobacteria</taxon>
        <taxon>Burkholderiales</taxon>
        <taxon>Oxalobacteraceae</taxon>
        <taxon>Herminiimonas</taxon>
    </lineage>
</organism>
<dbReference type="EC" id="3.6.5.n1" evidence="1"/>
<dbReference type="EMBL" id="CU207211">
    <property type="protein sequence ID" value="CAL62208.1"/>
    <property type="molecule type" value="Genomic_DNA"/>
</dbReference>
<dbReference type="SMR" id="A4G6S1"/>
<dbReference type="STRING" id="204773.HEAR2066"/>
<dbReference type="KEGG" id="har:HEAR2066"/>
<dbReference type="eggNOG" id="COG0481">
    <property type="taxonomic scope" value="Bacteria"/>
</dbReference>
<dbReference type="HOGENOM" id="CLU_009995_3_3_4"/>
<dbReference type="OrthoDB" id="9801472at2"/>
<dbReference type="Proteomes" id="UP000006697">
    <property type="component" value="Chromosome"/>
</dbReference>
<dbReference type="GO" id="GO:0005886">
    <property type="term" value="C:plasma membrane"/>
    <property type="evidence" value="ECO:0007669"/>
    <property type="project" value="UniProtKB-SubCell"/>
</dbReference>
<dbReference type="GO" id="GO:0005525">
    <property type="term" value="F:GTP binding"/>
    <property type="evidence" value="ECO:0007669"/>
    <property type="project" value="UniProtKB-UniRule"/>
</dbReference>
<dbReference type="GO" id="GO:0003924">
    <property type="term" value="F:GTPase activity"/>
    <property type="evidence" value="ECO:0007669"/>
    <property type="project" value="UniProtKB-UniRule"/>
</dbReference>
<dbReference type="GO" id="GO:0097216">
    <property type="term" value="F:guanosine tetraphosphate binding"/>
    <property type="evidence" value="ECO:0007669"/>
    <property type="project" value="UniProtKB-ARBA"/>
</dbReference>
<dbReference type="GO" id="GO:0043022">
    <property type="term" value="F:ribosome binding"/>
    <property type="evidence" value="ECO:0007669"/>
    <property type="project" value="UniProtKB-UniRule"/>
</dbReference>
<dbReference type="GO" id="GO:0003746">
    <property type="term" value="F:translation elongation factor activity"/>
    <property type="evidence" value="ECO:0007669"/>
    <property type="project" value="UniProtKB-UniRule"/>
</dbReference>
<dbReference type="GO" id="GO:0045727">
    <property type="term" value="P:positive regulation of translation"/>
    <property type="evidence" value="ECO:0007669"/>
    <property type="project" value="UniProtKB-UniRule"/>
</dbReference>
<dbReference type="CDD" id="cd16260">
    <property type="entry name" value="EF4_III"/>
    <property type="match status" value="1"/>
</dbReference>
<dbReference type="CDD" id="cd01890">
    <property type="entry name" value="LepA"/>
    <property type="match status" value="1"/>
</dbReference>
<dbReference type="CDD" id="cd03709">
    <property type="entry name" value="lepA_C"/>
    <property type="match status" value="1"/>
</dbReference>
<dbReference type="FunFam" id="3.40.50.300:FF:000078">
    <property type="entry name" value="Elongation factor 4"/>
    <property type="match status" value="1"/>
</dbReference>
<dbReference type="FunFam" id="2.40.30.10:FF:000015">
    <property type="entry name" value="Translation factor GUF1, mitochondrial"/>
    <property type="match status" value="1"/>
</dbReference>
<dbReference type="FunFam" id="3.30.70.240:FF:000007">
    <property type="entry name" value="Translation factor GUF1, mitochondrial"/>
    <property type="match status" value="1"/>
</dbReference>
<dbReference type="FunFam" id="3.30.70.2570:FF:000001">
    <property type="entry name" value="Translation factor GUF1, mitochondrial"/>
    <property type="match status" value="1"/>
</dbReference>
<dbReference type="FunFam" id="3.30.70.870:FF:000004">
    <property type="entry name" value="Translation factor GUF1, mitochondrial"/>
    <property type="match status" value="1"/>
</dbReference>
<dbReference type="Gene3D" id="3.30.70.240">
    <property type="match status" value="1"/>
</dbReference>
<dbReference type="Gene3D" id="3.30.70.2570">
    <property type="entry name" value="Elongation factor 4, C-terminal domain"/>
    <property type="match status" value="1"/>
</dbReference>
<dbReference type="Gene3D" id="3.30.70.870">
    <property type="entry name" value="Elongation Factor G (Translational Gtpase), domain 3"/>
    <property type="match status" value="1"/>
</dbReference>
<dbReference type="Gene3D" id="3.40.50.300">
    <property type="entry name" value="P-loop containing nucleotide triphosphate hydrolases"/>
    <property type="match status" value="1"/>
</dbReference>
<dbReference type="Gene3D" id="2.40.30.10">
    <property type="entry name" value="Translation factors"/>
    <property type="match status" value="1"/>
</dbReference>
<dbReference type="HAMAP" id="MF_00071">
    <property type="entry name" value="LepA"/>
    <property type="match status" value="1"/>
</dbReference>
<dbReference type="InterPro" id="IPR006297">
    <property type="entry name" value="EF-4"/>
</dbReference>
<dbReference type="InterPro" id="IPR035647">
    <property type="entry name" value="EFG_III/V"/>
</dbReference>
<dbReference type="InterPro" id="IPR000640">
    <property type="entry name" value="EFG_V-like"/>
</dbReference>
<dbReference type="InterPro" id="IPR004161">
    <property type="entry name" value="EFTu-like_2"/>
</dbReference>
<dbReference type="InterPro" id="IPR031157">
    <property type="entry name" value="G_TR_CS"/>
</dbReference>
<dbReference type="InterPro" id="IPR038363">
    <property type="entry name" value="LepA_C_sf"/>
</dbReference>
<dbReference type="InterPro" id="IPR013842">
    <property type="entry name" value="LepA_CTD"/>
</dbReference>
<dbReference type="InterPro" id="IPR035654">
    <property type="entry name" value="LepA_IV"/>
</dbReference>
<dbReference type="InterPro" id="IPR027417">
    <property type="entry name" value="P-loop_NTPase"/>
</dbReference>
<dbReference type="InterPro" id="IPR005225">
    <property type="entry name" value="Small_GTP-bd"/>
</dbReference>
<dbReference type="InterPro" id="IPR000795">
    <property type="entry name" value="T_Tr_GTP-bd_dom"/>
</dbReference>
<dbReference type="InterPro" id="IPR009000">
    <property type="entry name" value="Transl_B-barrel_sf"/>
</dbReference>
<dbReference type="NCBIfam" id="TIGR01393">
    <property type="entry name" value="lepA"/>
    <property type="match status" value="1"/>
</dbReference>
<dbReference type="NCBIfam" id="TIGR00231">
    <property type="entry name" value="small_GTP"/>
    <property type="match status" value="1"/>
</dbReference>
<dbReference type="PANTHER" id="PTHR43512:SF4">
    <property type="entry name" value="TRANSLATION FACTOR GUF1 HOMOLOG, CHLOROPLASTIC"/>
    <property type="match status" value="1"/>
</dbReference>
<dbReference type="PANTHER" id="PTHR43512">
    <property type="entry name" value="TRANSLATION FACTOR GUF1-RELATED"/>
    <property type="match status" value="1"/>
</dbReference>
<dbReference type="Pfam" id="PF00679">
    <property type="entry name" value="EFG_C"/>
    <property type="match status" value="1"/>
</dbReference>
<dbReference type="Pfam" id="PF00009">
    <property type="entry name" value="GTP_EFTU"/>
    <property type="match status" value="1"/>
</dbReference>
<dbReference type="Pfam" id="PF03144">
    <property type="entry name" value="GTP_EFTU_D2"/>
    <property type="match status" value="1"/>
</dbReference>
<dbReference type="Pfam" id="PF06421">
    <property type="entry name" value="LepA_C"/>
    <property type="match status" value="1"/>
</dbReference>
<dbReference type="PRINTS" id="PR00315">
    <property type="entry name" value="ELONGATNFCT"/>
</dbReference>
<dbReference type="SUPFAM" id="SSF54980">
    <property type="entry name" value="EF-G C-terminal domain-like"/>
    <property type="match status" value="2"/>
</dbReference>
<dbReference type="SUPFAM" id="SSF52540">
    <property type="entry name" value="P-loop containing nucleoside triphosphate hydrolases"/>
    <property type="match status" value="1"/>
</dbReference>
<dbReference type="SUPFAM" id="SSF50447">
    <property type="entry name" value="Translation proteins"/>
    <property type="match status" value="1"/>
</dbReference>
<dbReference type="PROSITE" id="PS00301">
    <property type="entry name" value="G_TR_1"/>
    <property type="match status" value="1"/>
</dbReference>
<dbReference type="PROSITE" id="PS51722">
    <property type="entry name" value="G_TR_2"/>
    <property type="match status" value="1"/>
</dbReference>
<keyword id="KW-0997">Cell inner membrane</keyword>
<keyword id="KW-1003">Cell membrane</keyword>
<keyword id="KW-0342">GTP-binding</keyword>
<keyword id="KW-0378">Hydrolase</keyword>
<keyword id="KW-0472">Membrane</keyword>
<keyword id="KW-0547">Nucleotide-binding</keyword>
<keyword id="KW-0648">Protein biosynthesis</keyword>
<keyword id="KW-1185">Reference proteome</keyword>
<proteinExistence type="inferred from homology"/>
<name>LEPA_HERAR</name>
<comment type="function">
    <text evidence="1">Required for accurate and efficient protein synthesis under certain stress conditions. May act as a fidelity factor of the translation reaction, by catalyzing a one-codon backward translocation of tRNAs on improperly translocated ribosomes. Back-translocation proceeds from a post-translocation (POST) complex to a pre-translocation (PRE) complex, thus giving elongation factor G a second chance to translocate the tRNAs correctly. Binds to ribosomes in a GTP-dependent manner.</text>
</comment>
<comment type="catalytic activity">
    <reaction evidence="1">
        <text>GTP + H2O = GDP + phosphate + H(+)</text>
        <dbReference type="Rhea" id="RHEA:19669"/>
        <dbReference type="ChEBI" id="CHEBI:15377"/>
        <dbReference type="ChEBI" id="CHEBI:15378"/>
        <dbReference type="ChEBI" id="CHEBI:37565"/>
        <dbReference type="ChEBI" id="CHEBI:43474"/>
        <dbReference type="ChEBI" id="CHEBI:58189"/>
        <dbReference type="EC" id="3.6.5.n1"/>
    </reaction>
</comment>
<comment type="subcellular location">
    <subcellularLocation>
        <location evidence="1">Cell inner membrane</location>
        <topology evidence="1">Peripheral membrane protein</topology>
        <orientation evidence="1">Cytoplasmic side</orientation>
    </subcellularLocation>
</comment>
<comment type="similarity">
    <text evidence="1">Belongs to the TRAFAC class translation factor GTPase superfamily. Classic translation factor GTPase family. LepA subfamily.</text>
</comment>
<gene>
    <name evidence="1" type="primary">lepA</name>
    <name type="ordered locus">HEAR2066</name>
</gene>
<evidence type="ECO:0000255" key="1">
    <source>
        <dbReference type="HAMAP-Rule" id="MF_00071"/>
    </source>
</evidence>
<reference key="1">
    <citation type="journal article" date="2007" name="PLoS Genet.">
        <title>A tale of two oxidation states: bacterial colonization of arsenic-rich environments.</title>
        <authorList>
            <person name="Muller D."/>
            <person name="Medigue C."/>
            <person name="Koechler S."/>
            <person name="Barbe V."/>
            <person name="Barakat M."/>
            <person name="Talla E."/>
            <person name="Bonnefoy V."/>
            <person name="Krin E."/>
            <person name="Arsene-Ploetze F."/>
            <person name="Carapito C."/>
            <person name="Chandler M."/>
            <person name="Cournoyer B."/>
            <person name="Cruveiller S."/>
            <person name="Dossat C."/>
            <person name="Duval S."/>
            <person name="Heymann M."/>
            <person name="Leize E."/>
            <person name="Lieutaud A."/>
            <person name="Lievremont D."/>
            <person name="Makita Y."/>
            <person name="Mangenot S."/>
            <person name="Nitschke W."/>
            <person name="Ortet P."/>
            <person name="Perdrial N."/>
            <person name="Schoepp B."/>
            <person name="Siguier P."/>
            <person name="Simeonova D.D."/>
            <person name="Rouy Z."/>
            <person name="Segurens B."/>
            <person name="Turlin E."/>
            <person name="Vallenet D."/>
            <person name="van Dorsselaer A."/>
            <person name="Weiss S."/>
            <person name="Weissenbach J."/>
            <person name="Lett M.-C."/>
            <person name="Danchin A."/>
            <person name="Bertin P.N."/>
        </authorList>
    </citation>
    <scope>NUCLEOTIDE SEQUENCE [LARGE SCALE GENOMIC DNA]</scope>
    <source>
        <strain>ULPAs1</strain>
    </source>
</reference>
<sequence>MNNIRNFSIIAHIDHGKSTLADRIIQLCGGLSDREMEAQVLDSMDLERERGITIKAQTAALTYKARDGQVYNLNLIDTPGHVDFSYEVSRSLSACEGALLVVDASQGVEAQTVANCYMALDLGVEVVPVLNKIDLPNADPPAAMAEIEDVIGIDATDAVQCSAKTGLGVADVLEALIAKVPPPKGDPDAPLQALIVDSWFDNYVGVVMLVRVVNGTLKPKEKIRLMASGSVNLVESIGIFAPRSVSLPSLSAGQVGFIIAGIKELKAAKVGDTVTLASRPAAEALPGFKEVQPQVFAGLFPVEANQYDALRDSLEKLKLNDAALMYEPEVSQALGFGFRCGFLGLLHMEIVQERLEREFDMDLITTAPTVVYEVIMGDGSLIKVDNPSKMPEPSKIEEIREPIVTVNLYMPQEYVGSVITLCIAKRGIQMDMSYHGRQVKLVYEMPMAEIVLDFFDKLKSTSRGYASMDYEFKEYRASDVVKVDMLINSEKVDALAIIVHRSNSQYRGRQVASKMRELIPRQMFDVAIQATIGANIISRENVKALRKNVLAKCYGGDISRKKKLLEKQKAGKKRMKQVGSVEIPQEAFLAILQVDDK</sequence>
<accession>A4G6S1</accession>
<feature type="chain" id="PRO_1000032005" description="Elongation factor 4">
    <location>
        <begin position="1"/>
        <end position="597"/>
    </location>
</feature>
<feature type="domain" description="tr-type G">
    <location>
        <begin position="2"/>
        <end position="184"/>
    </location>
</feature>
<feature type="binding site" evidence="1">
    <location>
        <begin position="14"/>
        <end position="19"/>
    </location>
    <ligand>
        <name>GTP</name>
        <dbReference type="ChEBI" id="CHEBI:37565"/>
    </ligand>
</feature>
<feature type="binding site" evidence="1">
    <location>
        <begin position="131"/>
        <end position="134"/>
    </location>
    <ligand>
        <name>GTP</name>
        <dbReference type="ChEBI" id="CHEBI:37565"/>
    </ligand>
</feature>